<name>RL16_FINM2</name>
<organism>
    <name type="scientific">Finegoldia magna (strain ATCC 29328 / DSM 20472 / WAL 2508)</name>
    <name type="common">Peptostreptococcus magnus</name>
    <dbReference type="NCBI Taxonomy" id="334413"/>
    <lineage>
        <taxon>Bacteria</taxon>
        <taxon>Bacillati</taxon>
        <taxon>Bacillota</taxon>
        <taxon>Tissierellia</taxon>
        <taxon>Tissierellales</taxon>
        <taxon>Peptoniphilaceae</taxon>
        <taxon>Finegoldia</taxon>
    </lineage>
</organism>
<accession>B0RZU7</accession>
<feature type="chain" id="PRO_0000354601" description="Large ribosomal subunit protein uL16">
    <location>
        <begin position="1"/>
        <end position="147"/>
    </location>
</feature>
<evidence type="ECO:0000255" key="1">
    <source>
        <dbReference type="HAMAP-Rule" id="MF_01342"/>
    </source>
</evidence>
<evidence type="ECO:0000305" key="2"/>
<comment type="function">
    <text evidence="1">Binds 23S rRNA and is also seen to make contacts with the A and possibly P site tRNAs.</text>
</comment>
<comment type="subunit">
    <text evidence="1">Part of the 50S ribosomal subunit.</text>
</comment>
<comment type="similarity">
    <text evidence="1">Belongs to the universal ribosomal protein uL16 family.</text>
</comment>
<gene>
    <name evidence="1" type="primary">rplP</name>
    <name type="ordered locus">FMG_0162</name>
</gene>
<keyword id="KW-1185">Reference proteome</keyword>
<keyword id="KW-0687">Ribonucleoprotein</keyword>
<keyword id="KW-0689">Ribosomal protein</keyword>
<keyword id="KW-0694">RNA-binding</keyword>
<keyword id="KW-0699">rRNA-binding</keyword>
<keyword id="KW-0820">tRNA-binding</keyword>
<proteinExistence type="inferred from homology"/>
<dbReference type="EMBL" id="AP008971">
    <property type="protein sequence ID" value="BAG07580.1"/>
    <property type="molecule type" value="Genomic_DNA"/>
</dbReference>
<dbReference type="RefSeq" id="WP_002836117.1">
    <property type="nucleotide sequence ID" value="NC_010376.1"/>
</dbReference>
<dbReference type="SMR" id="B0RZU7"/>
<dbReference type="STRING" id="334413.FMG_0162"/>
<dbReference type="GeneID" id="60839397"/>
<dbReference type="KEGG" id="fma:FMG_0162"/>
<dbReference type="eggNOG" id="COG0197">
    <property type="taxonomic scope" value="Bacteria"/>
</dbReference>
<dbReference type="HOGENOM" id="CLU_078858_2_1_9"/>
<dbReference type="Proteomes" id="UP000001319">
    <property type="component" value="Chromosome"/>
</dbReference>
<dbReference type="GO" id="GO:0022625">
    <property type="term" value="C:cytosolic large ribosomal subunit"/>
    <property type="evidence" value="ECO:0007669"/>
    <property type="project" value="TreeGrafter"/>
</dbReference>
<dbReference type="GO" id="GO:0019843">
    <property type="term" value="F:rRNA binding"/>
    <property type="evidence" value="ECO:0007669"/>
    <property type="project" value="UniProtKB-UniRule"/>
</dbReference>
<dbReference type="GO" id="GO:0003735">
    <property type="term" value="F:structural constituent of ribosome"/>
    <property type="evidence" value="ECO:0007669"/>
    <property type="project" value="InterPro"/>
</dbReference>
<dbReference type="GO" id="GO:0000049">
    <property type="term" value="F:tRNA binding"/>
    <property type="evidence" value="ECO:0007669"/>
    <property type="project" value="UniProtKB-KW"/>
</dbReference>
<dbReference type="GO" id="GO:0006412">
    <property type="term" value="P:translation"/>
    <property type="evidence" value="ECO:0007669"/>
    <property type="project" value="UniProtKB-UniRule"/>
</dbReference>
<dbReference type="CDD" id="cd01433">
    <property type="entry name" value="Ribosomal_L16_L10e"/>
    <property type="match status" value="1"/>
</dbReference>
<dbReference type="FunFam" id="3.90.1170.10:FF:000001">
    <property type="entry name" value="50S ribosomal protein L16"/>
    <property type="match status" value="1"/>
</dbReference>
<dbReference type="Gene3D" id="3.90.1170.10">
    <property type="entry name" value="Ribosomal protein L10e/L16"/>
    <property type="match status" value="1"/>
</dbReference>
<dbReference type="HAMAP" id="MF_01342">
    <property type="entry name" value="Ribosomal_uL16"/>
    <property type="match status" value="1"/>
</dbReference>
<dbReference type="InterPro" id="IPR047873">
    <property type="entry name" value="Ribosomal_uL16"/>
</dbReference>
<dbReference type="InterPro" id="IPR000114">
    <property type="entry name" value="Ribosomal_uL16_bact-type"/>
</dbReference>
<dbReference type="InterPro" id="IPR020798">
    <property type="entry name" value="Ribosomal_uL16_CS"/>
</dbReference>
<dbReference type="InterPro" id="IPR016180">
    <property type="entry name" value="Ribosomal_uL16_dom"/>
</dbReference>
<dbReference type="InterPro" id="IPR036920">
    <property type="entry name" value="Ribosomal_uL16_sf"/>
</dbReference>
<dbReference type="NCBIfam" id="TIGR01164">
    <property type="entry name" value="rplP_bact"/>
    <property type="match status" value="1"/>
</dbReference>
<dbReference type="PANTHER" id="PTHR12220">
    <property type="entry name" value="50S/60S RIBOSOMAL PROTEIN L16"/>
    <property type="match status" value="1"/>
</dbReference>
<dbReference type="PANTHER" id="PTHR12220:SF13">
    <property type="entry name" value="LARGE RIBOSOMAL SUBUNIT PROTEIN UL16M"/>
    <property type="match status" value="1"/>
</dbReference>
<dbReference type="Pfam" id="PF00252">
    <property type="entry name" value="Ribosomal_L16"/>
    <property type="match status" value="1"/>
</dbReference>
<dbReference type="PRINTS" id="PR00060">
    <property type="entry name" value="RIBOSOMALL16"/>
</dbReference>
<dbReference type="SUPFAM" id="SSF54686">
    <property type="entry name" value="Ribosomal protein L16p/L10e"/>
    <property type="match status" value="1"/>
</dbReference>
<dbReference type="PROSITE" id="PS00701">
    <property type="entry name" value="RIBOSOMAL_L16_2"/>
    <property type="match status" value="1"/>
</dbReference>
<sequence length="147" mass="16603">MLMPKRVKYRRVHRGRMKGKALKGNTLTYGDYGIQALGSCWLTANQIEAARRAMTRYIKRGGNIWIKVFPDKPVSKKPIGIRMGSGKGAPEYWVAVIKPGRVLFEMAGVPEDVAREAMRLAQHKLPIKTKFIAREEFGEKDGEADEN</sequence>
<protein>
    <recommendedName>
        <fullName evidence="1">Large ribosomal subunit protein uL16</fullName>
    </recommendedName>
    <alternativeName>
        <fullName evidence="2">50S ribosomal protein L16</fullName>
    </alternativeName>
</protein>
<reference key="1">
    <citation type="journal article" date="2008" name="DNA Res.">
        <title>Complete genome sequence of Finegoldia magna, an anaerobic opportunistic pathogen.</title>
        <authorList>
            <person name="Goto T."/>
            <person name="Yamashita A."/>
            <person name="Hirakawa H."/>
            <person name="Matsutani M."/>
            <person name="Todo K."/>
            <person name="Ohshima K."/>
            <person name="Toh H."/>
            <person name="Miyamoto K."/>
            <person name="Kuhara S."/>
            <person name="Hattori M."/>
            <person name="Shimizu T."/>
            <person name="Akimoto S."/>
        </authorList>
    </citation>
    <scope>NUCLEOTIDE SEQUENCE [LARGE SCALE GENOMIC DNA]</scope>
    <source>
        <strain>ATCC 29328 / DSM 20472 / WAL 2508</strain>
    </source>
</reference>